<evidence type="ECO:0000250" key="1"/>
<evidence type="ECO:0000255" key="2"/>
<evidence type="ECO:0000269" key="3">
    <source>
    </source>
</evidence>
<evidence type="ECO:0000269" key="4">
    <source>
    </source>
</evidence>
<evidence type="ECO:0000305" key="5"/>
<evidence type="ECO:0000312" key="6">
    <source>
        <dbReference type="EMBL" id="BAF81545.1"/>
    </source>
</evidence>
<feature type="signal peptide" evidence="2">
    <location>
        <begin position="1"/>
        <end position="35"/>
    </location>
</feature>
<feature type="chain" id="PRO_0000314636" description="Trehalase" evidence="2">
    <location>
        <begin position="36"/>
        <end position="626"/>
    </location>
</feature>
<feature type="topological domain" description="Extracellular" evidence="2">
    <location>
        <begin position="36"/>
        <end position="595"/>
    </location>
</feature>
<feature type="transmembrane region" description="Helical" evidence="2">
    <location>
        <begin position="596"/>
        <end position="616"/>
    </location>
</feature>
<feature type="topological domain" description="Cytoplasmic" evidence="2">
    <location>
        <begin position="617"/>
        <end position="626"/>
    </location>
</feature>
<feature type="active site" description="Proton donor/acceptor" evidence="1">
    <location>
        <position position="335"/>
    </location>
</feature>
<feature type="active site" description="Proton donor/acceptor" evidence="1">
    <location>
        <position position="532"/>
    </location>
</feature>
<feature type="binding site" evidence="1">
    <location>
        <position position="181"/>
    </location>
    <ligand>
        <name>substrate</name>
    </ligand>
</feature>
<feature type="binding site" evidence="1">
    <location>
        <begin position="188"/>
        <end position="189"/>
    </location>
    <ligand>
        <name>substrate</name>
    </ligand>
</feature>
<feature type="binding site" evidence="1">
    <location>
        <position position="225"/>
    </location>
    <ligand>
        <name>substrate</name>
    </ligand>
</feature>
<feature type="binding site" evidence="1">
    <location>
        <begin position="234"/>
        <end position="236"/>
    </location>
    <ligand>
        <name>substrate</name>
    </ligand>
</feature>
<feature type="binding site" evidence="1">
    <location>
        <begin position="299"/>
        <end position="301"/>
    </location>
    <ligand>
        <name>substrate</name>
    </ligand>
</feature>
<feature type="binding site" evidence="1">
    <location>
        <position position="333"/>
    </location>
    <ligand>
        <name>substrate</name>
    </ligand>
</feature>
<feature type="binding site" evidence="1">
    <location>
        <position position="547"/>
    </location>
    <ligand>
        <name>substrate</name>
    </ligand>
</feature>
<feature type="glycosylation site" description="N-linked (GlcNAc...) asparagine" evidence="2">
    <location>
        <position position="104"/>
    </location>
</feature>
<feature type="glycosylation site" description="N-linked (GlcNAc...) asparagine" evidence="2">
    <location>
        <position position="274"/>
    </location>
</feature>
<feature type="glycosylation site" description="N-linked (GlcNAc...) asparagine" evidence="2">
    <location>
        <position position="350"/>
    </location>
</feature>
<feature type="glycosylation site" description="N-linked (GlcNAc...) asparagine" evidence="2">
    <location>
        <position position="384"/>
    </location>
</feature>
<feature type="glycosylation site" description="N-linked (GlcNAc...) asparagine" evidence="2">
    <location>
        <position position="498"/>
    </location>
</feature>
<feature type="glycosylation site" description="N-linked (GlcNAc...) asparagine" evidence="2">
    <location>
        <position position="525"/>
    </location>
</feature>
<comment type="catalytic activity">
    <reaction evidence="3 4">
        <text>alpha,alpha-trehalose + H2O = alpha-D-glucose + beta-D-glucose</text>
        <dbReference type="Rhea" id="RHEA:32675"/>
        <dbReference type="ChEBI" id="CHEBI:15377"/>
        <dbReference type="ChEBI" id="CHEBI:15903"/>
        <dbReference type="ChEBI" id="CHEBI:16551"/>
        <dbReference type="ChEBI" id="CHEBI:17925"/>
        <dbReference type="EC" id="3.2.1.28"/>
    </reaction>
</comment>
<comment type="activity regulation">
    <text evidence="3">Inhibited by sodium, potassium and ammonium ions, and by TEMED.</text>
</comment>
<comment type="biophysicochemical properties">
    <kinetics>
        <KM evidence="3 4">0.66 mM for alpha,alpha-trehalose (in 0.1 M sodium phosphate pH 6.75, at 35 degrees Celsius)</KM>
        <KM evidence="3 4">0.52 mM for alpha,alpha-trehalose (in 50 mM sodium phosphate pH 6.6, at 35 degrees Celsius)</KM>
    </kinetics>
    <phDependence>
        <text evidence="3 4">Optimum pH is 6.7 when incubated for 5 minutes at 35 degrees Celsius. Active from pH 4.5 to 12.5 when incubated for 5 minutes at 35 degrees Celsius. Optimum pH is 7.0 when incubated for 24 hours at 4 degrees Celsius. Active from pH 5.0 to 10.5 when incubated for 24 hours at 4 degrees Celsius.</text>
    </phDependence>
    <temperatureDependence>
        <text evidence="3 4">Stable up to 40 degrees Celsius, but activity is lost after 15 minutes incubation at 60 degrees Celsius.</text>
    </temperatureDependence>
</comment>
<comment type="subunit">
    <text evidence="3">Monomer.</text>
</comment>
<comment type="subcellular location">
    <subcellularLocation>
        <location evidence="2">Membrane</location>
        <topology evidence="5">Single-pass type I membrane protein</topology>
    </subcellularLocation>
</comment>
<comment type="PTM">
    <text evidence="3">Glycosylated; contains 3.1% carbohydrates.</text>
</comment>
<comment type="similarity">
    <text evidence="2">Belongs to the glycosyl hydrolase 37 family.</text>
</comment>
<name>TREA_APIME</name>
<organism>
    <name type="scientific">Apis mellifera</name>
    <name type="common">Honeybee</name>
    <dbReference type="NCBI Taxonomy" id="7460"/>
    <lineage>
        <taxon>Eukaryota</taxon>
        <taxon>Metazoa</taxon>
        <taxon>Ecdysozoa</taxon>
        <taxon>Arthropoda</taxon>
        <taxon>Hexapoda</taxon>
        <taxon>Insecta</taxon>
        <taxon>Pterygota</taxon>
        <taxon>Neoptera</taxon>
        <taxon>Endopterygota</taxon>
        <taxon>Hymenoptera</taxon>
        <taxon>Apocrita</taxon>
        <taxon>Aculeata</taxon>
        <taxon>Apoidea</taxon>
        <taxon>Anthophila</taxon>
        <taxon>Apidae</taxon>
        <taxon>Apis</taxon>
    </lineage>
</organism>
<dbReference type="EC" id="3.2.1.28"/>
<dbReference type="EMBL" id="AB301556">
    <property type="protein sequence ID" value="BAF81545.1"/>
    <property type="molecule type" value="mRNA"/>
</dbReference>
<dbReference type="RefSeq" id="NP_001106141.1">
    <property type="nucleotide sequence ID" value="NM_001112671.1"/>
</dbReference>
<dbReference type="SMR" id="A8J4S9"/>
<dbReference type="FunCoup" id="A8J4S9">
    <property type="interactions" value="183"/>
</dbReference>
<dbReference type="STRING" id="7460.A8J4S9"/>
<dbReference type="CAZy" id="GH37">
    <property type="family name" value="Glycoside Hydrolase Family 37"/>
</dbReference>
<dbReference type="PaxDb" id="7460-GB55489-PA"/>
<dbReference type="EnsemblMetazoa" id="NM_001112671">
    <property type="protein sequence ID" value="NP_001106141"/>
    <property type="gene ID" value="LOC410795"/>
</dbReference>
<dbReference type="GeneID" id="410795"/>
<dbReference type="KEGG" id="ame:410795"/>
<dbReference type="eggNOG" id="KOG0602">
    <property type="taxonomic scope" value="Eukaryota"/>
</dbReference>
<dbReference type="InParanoid" id="A8J4S9"/>
<dbReference type="OrthoDB" id="3542292at2759"/>
<dbReference type="PhylomeDB" id="A8J4S9"/>
<dbReference type="BioCyc" id="MetaCyc:MONOMER-17105"/>
<dbReference type="BRENDA" id="3.2.1.28">
    <property type="organism ID" value="387"/>
</dbReference>
<dbReference type="Proteomes" id="UP000005203">
    <property type="component" value="Linkage group LG2"/>
</dbReference>
<dbReference type="GO" id="GO:0016020">
    <property type="term" value="C:membrane"/>
    <property type="evidence" value="ECO:0007669"/>
    <property type="project" value="UniProtKB-SubCell"/>
</dbReference>
<dbReference type="GO" id="GO:0004555">
    <property type="term" value="F:alpha,alpha-trehalase activity"/>
    <property type="evidence" value="ECO:0007669"/>
    <property type="project" value="UniProtKB-EC"/>
</dbReference>
<dbReference type="GO" id="GO:0005993">
    <property type="term" value="P:trehalose catabolic process"/>
    <property type="evidence" value="ECO:0007669"/>
    <property type="project" value="TreeGrafter"/>
</dbReference>
<dbReference type="Gene3D" id="1.50.10.10">
    <property type="match status" value="1"/>
</dbReference>
<dbReference type="InterPro" id="IPR008928">
    <property type="entry name" value="6-hairpin_glycosidase_sf"/>
</dbReference>
<dbReference type="InterPro" id="IPR012341">
    <property type="entry name" value="6hp_glycosidase-like_sf"/>
</dbReference>
<dbReference type="InterPro" id="IPR001661">
    <property type="entry name" value="Glyco_hydro_37"/>
</dbReference>
<dbReference type="InterPro" id="IPR018232">
    <property type="entry name" value="Glyco_hydro_37_CS"/>
</dbReference>
<dbReference type="PANTHER" id="PTHR23403">
    <property type="entry name" value="TREHALASE"/>
    <property type="match status" value="1"/>
</dbReference>
<dbReference type="PANTHER" id="PTHR23403:SF1">
    <property type="entry name" value="TREHALASE"/>
    <property type="match status" value="1"/>
</dbReference>
<dbReference type="Pfam" id="PF01204">
    <property type="entry name" value="Trehalase"/>
    <property type="match status" value="1"/>
</dbReference>
<dbReference type="PRINTS" id="PR00744">
    <property type="entry name" value="GLHYDRLASE37"/>
</dbReference>
<dbReference type="SUPFAM" id="SSF48208">
    <property type="entry name" value="Six-hairpin glycosidases"/>
    <property type="match status" value="1"/>
</dbReference>
<dbReference type="PROSITE" id="PS00927">
    <property type="entry name" value="TREHALASE_1"/>
    <property type="match status" value="1"/>
</dbReference>
<dbReference type="PROSITE" id="PS00928">
    <property type="entry name" value="TREHALASE_2"/>
    <property type="match status" value="1"/>
</dbReference>
<proteinExistence type="evidence at protein level"/>
<reference evidence="5 6" key="1">
    <citation type="journal article" date="2007" name="Biosci. Biotechnol. Biochem.">
        <title>Molecular cloning of cDNA for trehalase from the European honeybee, Apis mellifera L., and its heterologous expression in Pichia pastoris.</title>
        <authorList>
            <person name="Lee J.-H."/>
            <person name="Saito S."/>
            <person name="Mori H."/>
            <person name="Nishimoto M."/>
            <person name="Okuyama M."/>
            <person name="Kim D."/>
            <person name="Wongchawalit J."/>
            <person name="Kimura A."/>
            <person name="Chiba S."/>
        </authorList>
    </citation>
    <scope>NUCLEOTIDE SEQUENCE [MRNA]</scope>
    <scope>PROTEIN SEQUENCE OF 36-54; 128-147; 157-188; 220-239; 426-444 AND 500-519</scope>
    <scope>CATALYTIC ACTIVITY</scope>
    <scope>BIOPHYSICOCHEMICAL PROPERTIES</scope>
</reference>
<reference evidence="5" key="2">
    <citation type="journal article" date="2001" name="Biosci. Biotechnol. Biochem.">
        <title>Purification and identification of the essential ionizable groups of honeybee, Apis mellifera L., trehalase.</title>
        <authorList>
            <person name="Lee J.-H."/>
            <person name="Tsuji M."/>
            <person name="Nakamura M."/>
            <person name="Nishimoto M."/>
            <person name="Okuyama M."/>
            <person name="Mori H."/>
            <person name="Kimura A."/>
            <person name="Matsui H."/>
            <person name="Chiba S."/>
        </authorList>
    </citation>
    <scope>CATALYTIC ACTIVITY</scope>
    <scope>ACTIVITY REGULATION</scope>
    <scope>BIOPHYSICOCHEMICAL PROPERTIES</scope>
    <scope>SUBUNIT</scope>
    <scope>GLYCOSYLATION</scope>
</reference>
<sequence>MASSCSIRCGSRNILVNAAATFLALLVVLRCFANAEKPSPCQSDVYCRGELLHTIQMASIYKDSKTFVDMKMKRPPDETLKSFREFMERHEQMPTRYQIERFVNDTFDPEGSEFEDWDPDDWTFRPKFLSRILDDDLRNFASELNGIWKMLGRKMKDDVRVNEELYSIIYVPHPVIVPGGRFREFYYWDSYWIVKGLLLSEMYTTVKGMLTNFVSLVDKIGFIPNGGRIYYTMRSQPPMLIPMVDEYLKITHDYEWLENNLYLLEKEFDFWMTNRTVEIEVDGVNYVLARYNEQSSGPRPESYKEDYLTSQSFRTNEEKDNYYSELKTAAESGWDFSSRWFILDGTNKGNLTNLKTRYIIPVDLNSIIYRNAVLLAQYNQRMGNESKVAYYQKRAAEWKRAIQAVLWHDEVGAWLDYDILNDIKRDYFYPTNILPLWTDCYDIAKREEYVSKVLKYLEKNKIMLNLGGIPTTLEHSGEQWDYPNAWPPLQYFVIMALNKTEDPWAQRLAYEISERWVRSNYKAYNETHSMFEKYDATVSGGHGGGGEYEVQLGFGWSNGVIMDLLNRYGDKLTAEDRFVATFHSNSTPQPVVVSTAGQVMTGILALVISLAAGFIGKMRCANNAAQ</sequence>
<accession>A8J4S9</accession>
<accession>P85151</accession>
<protein>
    <recommendedName>
        <fullName>Trehalase</fullName>
        <ecNumber>3.2.1.28</ecNumber>
    </recommendedName>
    <alternativeName>
        <fullName>Alpha,alpha-trehalase</fullName>
    </alternativeName>
    <alternativeName>
        <fullName>Alpha,alpha-trehalose glucohydrolase</fullName>
    </alternativeName>
</protein>
<keyword id="KW-0903">Direct protein sequencing</keyword>
<keyword id="KW-0325">Glycoprotein</keyword>
<keyword id="KW-0326">Glycosidase</keyword>
<keyword id="KW-0378">Hydrolase</keyword>
<keyword id="KW-0472">Membrane</keyword>
<keyword id="KW-1185">Reference proteome</keyword>
<keyword id="KW-0732">Signal</keyword>
<keyword id="KW-0812">Transmembrane</keyword>
<keyword id="KW-1133">Transmembrane helix</keyword>